<proteinExistence type="evidence at transcript level"/>
<accession>Q8R4S2</accession>
<dbReference type="EMBL" id="AF405571">
    <property type="protein sequence ID" value="AAL89736.1"/>
    <property type="molecule type" value="mRNA"/>
</dbReference>
<dbReference type="SMR" id="Q8R4S2"/>
<dbReference type="MGI" id="MGI:105043">
    <property type="gene designation" value="Ahr"/>
</dbReference>
<dbReference type="GO" id="GO:0005737">
    <property type="term" value="C:cytoplasm"/>
    <property type="evidence" value="ECO:0000250"/>
    <property type="project" value="UniProtKB"/>
</dbReference>
<dbReference type="GO" id="GO:0034753">
    <property type="term" value="C:nuclear aryl hydrocarbon receptor complex"/>
    <property type="evidence" value="ECO:0000250"/>
    <property type="project" value="UniProtKB"/>
</dbReference>
<dbReference type="GO" id="GO:0005634">
    <property type="term" value="C:nucleus"/>
    <property type="evidence" value="ECO:0000314"/>
    <property type="project" value="UniProt"/>
</dbReference>
<dbReference type="GO" id="GO:0070888">
    <property type="term" value="F:E-box binding"/>
    <property type="evidence" value="ECO:0000250"/>
    <property type="project" value="UniProtKB"/>
</dbReference>
<dbReference type="GO" id="GO:0004879">
    <property type="term" value="F:nuclear receptor activity"/>
    <property type="evidence" value="ECO:0000314"/>
    <property type="project" value="UniProt"/>
</dbReference>
<dbReference type="GO" id="GO:0046982">
    <property type="term" value="F:protein heterodimerization activity"/>
    <property type="evidence" value="ECO:0000250"/>
    <property type="project" value="UniProtKB"/>
</dbReference>
<dbReference type="GO" id="GO:0042803">
    <property type="term" value="F:protein homodimerization activity"/>
    <property type="evidence" value="ECO:0000250"/>
    <property type="project" value="UniProtKB"/>
</dbReference>
<dbReference type="GO" id="GO:1990837">
    <property type="term" value="F:sequence-specific double-stranded DNA binding"/>
    <property type="evidence" value="ECO:0000250"/>
    <property type="project" value="UniProtKB"/>
</dbReference>
<dbReference type="GO" id="GO:1904613">
    <property type="term" value="P:cellular response to 2,3,7,8-tetrachlorodibenzodioxine"/>
    <property type="evidence" value="ECO:0000314"/>
    <property type="project" value="UniProt"/>
</dbReference>
<dbReference type="GO" id="GO:1904682">
    <property type="term" value="P:cellular response to 3-methylcholanthrene"/>
    <property type="evidence" value="ECO:0000250"/>
    <property type="project" value="UniProtKB"/>
</dbReference>
<dbReference type="GO" id="GO:0032922">
    <property type="term" value="P:circadian regulation of gene expression"/>
    <property type="evidence" value="ECO:0000250"/>
    <property type="project" value="UniProtKB"/>
</dbReference>
<dbReference type="GO" id="GO:0045892">
    <property type="term" value="P:negative regulation of DNA-templated transcription"/>
    <property type="evidence" value="ECO:0000250"/>
    <property type="project" value="UniProtKB"/>
</dbReference>
<dbReference type="GO" id="GO:0002841">
    <property type="term" value="P:negative regulation of T cell mediated immune response to tumor cell"/>
    <property type="evidence" value="ECO:0000250"/>
    <property type="project" value="UniProtKB"/>
</dbReference>
<dbReference type="GO" id="GO:0045893">
    <property type="term" value="P:positive regulation of DNA-templated transcription"/>
    <property type="evidence" value="ECO:0000250"/>
    <property type="project" value="UniProtKB"/>
</dbReference>
<dbReference type="GO" id="GO:0045944">
    <property type="term" value="P:positive regulation of transcription by RNA polymerase II"/>
    <property type="evidence" value="ECO:0000250"/>
    <property type="project" value="UniProtKB"/>
</dbReference>
<dbReference type="GO" id="GO:0002819">
    <property type="term" value="P:regulation of adaptive immune response"/>
    <property type="evidence" value="ECO:0000250"/>
    <property type="project" value="UniProtKB"/>
</dbReference>
<dbReference type="GO" id="GO:0006355">
    <property type="term" value="P:regulation of DNA-templated transcription"/>
    <property type="evidence" value="ECO:0000250"/>
    <property type="project" value="UniProtKB"/>
</dbReference>
<dbReference type="GO" id="GO:0009410">
    <property type="term" value="P:response to xenobiotic stimulus"/>
    <property type="evidence" value="ECO:0000250"/>
    <property type="project" value="UniProtKB"/>
</dbReference>
<dbReference type="GO" id="GO:0006366">
    <property type="term" value="P:transcription by RNA polymerase II"/>
    <property type="evidence" value="ECO:0000250"/>
    <property type="project" value="UniProtKB"/>
</dbReference>
<dbReference type="GO" id="GO:0006805">
    <property type="term" value="P:xenobiotic metabolic process"/>
    <property type="evidence" value="ECO:0007669"/>
    <property type="project" value="InterPro"/>
</dbReference>
<dbReference type="CDD" id="cd11436">
    <property type="entry name" value="bHLH-PAS_AhR"/>
    <property type="match status" value="1"/>
</dbReference>
<dbReference type="CDD" id="cd00130">
    <property type="entry name" value="PAS"/>
    <property type="match status" value="2"/>
</dbReference>
<dbReference type="FunFam" id="3.30.450.20:FF:000035">
    <property type="entry name" value="Aryl hydrocarbon receptor"/>
    <property type="match status" value="1"/>
</dbReference>
<dbReference type="FunFam" id="3.30.450.20:FF:000019">
    <property type="entry name" value="Aryl hydrocarbon receptor 1"/>
    <property type="match status" value="1"/>
</dbReference>
<dbReference type="FunFam" id="4.10.280.10:FF:000024">
    <property type="entry name" value="Aryl hydrocarbon receptor 2"/>
    <property type="match status" value="1"/>
</dbReference>
<dbReference type="Gene3D" id="4.10.280.10">
    <property type="entry name" value="Helix-loop-helix DNA-binding domain"/>
    <property type="match status" value="1"/>
</dbReference>
<dbReference type="Gene3D" id="3.30.450.20">
    <property type="entry name" value="PAS domain"/>
    <property type="match status" value="2"/>
</dbReference>
<dbReference type="InterPro" id="IPR039091">
    <property type="entry name" value="AHR/AHRR"/>
</dbReference>
<dbReference type="InterPro" id="IPR033348">
    <property type="entry name" value="AHR_bHLH"/>
</dbReference>
<dbReference type="InterPro" id="IPR011598">
    <property type="entry name" value="bHLH_dom"/>
</dbReference>
<dbReference type="InterPro" id="IPR036638">
    <property type="entry name" value="HLH_DNA-bd_sf"/>
</dbReference>
<dbReference type="InterPro" id="IPR001610">
    <property type="entry name" value="PAC"/>
</dbReference>
<dbReference type="InterPro" id="IPR000014">
    <property type="entry name" value="PAS"/>
</dbReference>
<dbReference type="InterPro" id="IPR035965">
    <property type="entry name" value="PAS-like_dom_sf"/>
</dbReference>
<dbReference type="InterPro" id="IPR013767">
    <property type="entry name" value="PAS_fold"/>
</dbReference>
<dbReference type="InterPro" id="IPR013655">
    <property type="entry name" value="PAS_fold_3"/>
</dbReference>
<dbReference type="PANTHER" id="PTHR10649">
    <property type="entry name" value="ARYL HYDROCARBON RECEPTOR"/>
    <property type="match status" value="1"/>
</dbReference>
<dbReference type="PANTHER" id="PTHR10649:SF9">
    <property type="entry name" value="ARYL HYDROCARBON RECEPTOR"/>
    <property type="match status" value="1"/>
</dbReference>
<dbReference type="Pfam" id="PF00010">
    <property type="entry name" value="HLH"/>
    <property type="match status" value="1"/>
</dbReference>
<dbReference type="Pfam" id="PF00989">
    <property type="entry name" value="PAS"/>
    <property type="match status" value="1"/>
</dbReference>
<dbReference type="Pfam" id="PF08447">
    <property type="entry name" value="PAS_3"/>
    <property type="match status" value="1"/>
</dbReference>
<dbReference type="SMART" id="SM00353">
    <property type="entry name" value="HLH"/>
    <property type="match status" value="1"/>
</dbReference>
<dbReference type="SMART" id="SM00086">
    <property type="entry name" value="PAC"/>
    <property type="match status" value="1"/>
</dbReference>
<dbReference type="SMART" id="SM00091">
    <property type="entry name" value="PAS"/>
    <property type="match status" value="2"/>
</dbReference>
<dbReference type="SUPFAM" id="SSF47459">
    <property type="entry name" value="HLH, helix-loop-helix DNA-binding domain"/>
    <property type="match status" value="1"/>
</dbReference>
<dbReference type="SUPFAM" id="SSF55785">
    <property type="entry name" value="PYP-like sensor domain (PAS domain)"/>
    <property type="match status" value="2"/>
</dbReference>
<dbReference type="PROSITE" id="PS50888">
    <property type="entry name" value="BHLH"/>
    <property type="match status" value="1"/>
</dbReference>
<dbReference type="PROSITE" id="PS50112">
    <property type="entry name" value="PAS"/>
    <property type="match status" value="1"/>
</dbReference>
<evidence type="ECO:0000250" key="1">
    <source>
        <dbReference type="UniProtKB" id="P30561"/>
    </source>
</evidence>
<evidence type="ECO:0000250" key="2">
    <source>
        <dbReference type="UniProtKB" id="P35869"/>
    </source>
</evidence>
<evidence type="ECO:0000255" key="3">
    <source>
        <dbReference type="PROSITE-ProRule" id="PRU00140"/>
    </source>
</evidence>
<evidence type="ECO:0000255" key="4">
    <source>
        <dbReference type="PROSITE-ProRule" id="PRU00981"/>
    </source>
</evidence>
<evidence type="ECO:0000256" key="5">
    <source>
        <dbReference type="SAM" id="MobiDB-lite"/>
    </source>
</evidence>
<evidence type="ECO:0000305" key="6"/>
<evidence type="ECO:0000312" key="7">
    <source>
        <dbReference type="EMBL" id="AAL89736.1"/>
    </source>
</evidence>
<sequence length="854" mass="95486">MSSGANITYASRKRRKPVQKTVKPIPAEGIKSNPSKRHRDRLNTELDRLASLLPFPQDVINKLDKLSVLRLSVSYLRAKSFFDVALKSTPADRNGGQDQCRAQIRDWQNLQEGEFLLQALNGFVLVVTADALVFYASSTIQDYLGFQQSDVIHQSVYELIHTEDRAEFQRQLHWALNPSQCTDSAQGVDEAHGPPQAAVYYTPDQLPPENASFMERCFRCRLRCLLDNSSGFLAMNFQGRLKYLHGQNKKGKDGALLPPQLALFAIATPLQPPSILEIRTKNFIFRTKHKLDFTPIGCDAKGQLILGYTEVELCTRGSGYQFIHAADMLHCAESHIRMIKTGESGMTVFRLLAKHSRWRWVQSNARLIYRNGRPDYIIATQRPLTDEEGREHLQKRSMSLPFMFATGEAVLYEISSPFSPIMDPLPIRTKSNTSRKDWAPQSTPSKDSFHPSSLMSALIQQDESIYLCPPSSPAPLDSHFLMGSVSKCGSWQDSFAATGSEAALKHEQIGHAQDVNLALSGGPSELFPDNKNNDLYSIMRDLGIDFEDIRSMQNEEFFRTDSTAAAAGEVDFKDIDITDEILTYVQDSLNNSTLLNSACQQQPVTQHLSCMLQERLQLEQQQQLQQPPPQALEPQQQLCQMVCPQQDLGPKHTQINGTFASWNPTPPVSFNCPQQELKHYQIFSSLQGTAQEFPYKPEVDSVPYTQNFAPCNQPLLPEHSKSVQLDFPGRDFEPSLHPTTSNLDFVSCLQVPENQSHGINSQSAMVSPQAYYAGAMSMYQCQPGPQRTPVDQTQYGSEIPGSQAFLSKVQSRGVFNETYSSDLSSIGHAAQTTGHLHHLAEARPLPDITPGGFL</sequence>
<gene>
    <name type="primary">Ahr</name>
</gene>
<name>AHR_MUSSP</name>
<feature type="propeptide" id="PRO_0000013462" evidence="1">
    <location>
        <begin position="1"/>
        <end position="9"/>
    </location>
</feature>
<feature type="chain" id="PRO_0000013463" description="Aryl hydrocarbon receptor">
    <location>
        <begin position="10"/>
        <end position="854"/>
    </location>
</feature>
<feature type="domain" description="bHLH" evidence="4">
    <location>
        <begin position="26"/>
        <end position="79"/>
    </location>
</feature>
<feature type="domain" description="PAS 1" evidence="3 6">
    <location>
        <begin position="111"/>
        <end position="175"/>
    </location>
</feature>
<feature type="domain" description="PAS 2" evidence="3 6">
    <location>
        <begin position="270"/>
        <end position="340"/>
    </location>
</feature>
<feature type="domain" description="PAC" evidence="6">
    <location>
        <begin position="346"/>
        <end position="387"/>
    </location>
</feature>
<feature type="region of interest" description="Disordered" evidence="5">
    <location>
        <begin position="1"/>
        <end position="38"/>
    </location>
</feature>
<feature type="region of interest" description="DNA-binding" evidence="2">
    <location>
        <begin position="37"/>
        <end position="65"/>
    </location>
</feature>
<feature type="region of interest" description="Required for maintaining the overall integrity of the AHR:ARNT heterodimer and its transcriptional activity" evidence="2">
    <location>
        <begin position="49"/>
        <end position="81"/>
    </location>
</feature>
<feature type="region of interest" description="Required for maintaining the overall integrity of the AHR:ARNT heterodimer and its transcriptional activity" evidence="1">
    <location>
        <begin position="116"/>
        <end position="124"/>
    </location>
</feature>
<feature type="region of interest" description="Required for maintaining the overall integrity of the AHR:ARNT heterodimer and its transcriptional activity" evidence="1">
    <location>
        <begin position="264"/>
        <end position="266"/>
    </location>
</feature>
<feature type="region of interest" description="Disordered" evidence="5">
    <location>
        <begin position="425"/>
        <end position="452"/>
    </location>
</feature>
<feature type="short sequence motif" description="Nuclear localization signal 1" evidence="2">
    <location>
        <begin position="12"/>
        <end position="15"/>
    </location>
</feature>
<feature type="short sequence motif" description="Nuclear localization signal 2" evidence="2">
    <location>
        <begin position="36"/>
        <end position="41"/>
    </location>
</feature>
<feature type="short sequence motif" description="Nuclear export signal" evidence="2">
    <location>
        <begin position="63"/>
        <end position="71"/>
    </location>
</feature>
<feature type="compositionally biased region" description="Polar residues" evidence="5">
    <location>
        <begin position="440"/>
        <end position="452"/>
    </location>
</feature>
<reference evidence="7" key="1">
    <citation type="journal article" date="2002" name="Pharmacogenetics">
        <title>Sequence variation and phylogenetic history of the mouse Ahr gene.</title>
        <authorList>
            <person name="Thomas R.S."/>
            <person name="Penn S.G."/>
            <person name="Holden K."/>
            <person name="Bradfield C.A."/>
            <person name="Rank D.R."/>
        </authorList>
    </citation>
    <scope>NUCLEOTIDE SEQUENCE [MRNA]</scope>
    <source>
        <strain>SPRETUS/Ei</strain>
    </source>
</reference>
<comment type="function">
    <text evidence="2">Ligand-activated transcription factor that enables cells to adapt to changing conditions by sensing compounds from the environment, diet, microbiome and cellular metabolism, and which plays important roles in development, immunity and cancer. Upon ligand binding, translocates into the nucleus, where it heterodimerizes with ARNT and induces transcription by binding to xenobiotic response elements (XRE). Regulates a variety of biological processes, including angiogenesis, hematopoiesis, drug and lipid metabolism, cell motility and immune modulation. Xenobiotics can act as ligands: upon xenobiotic-binding, activates the expression of multiple phase I and II xenobiotic chemical metabolizing enzyme genes (such as the CYP1A1 gene). Mediates biochemical and toxic effects of halogenated aromatic hydrocarbons. Next to xenobiotics, natural ligands derived from plants, microbiota, and endogenous metabolism are potent AHR agonists. Tryptophan (Trp) derivatives constitute an important class of endogenous AHR ligands. Acts as a negative regulator of anti-tumor immunity: indoles and kynurenic acid generated by Trp catabolism act as ligand and activate AHR, thereby promoting AHR-driven cancer cell motility and suppressing adaptive immunity. Regulates the circadian clock by inhibiting the basal and circadian expression of the core circadian component PER1. Inhibits PER1 by repressing the CLOCK-BMAL1 heterodimer mediated transcriptional activation of PER1. The heterodimer ARNT:AHR binds to core DNA sequence 5'-TGCGTG-3' within the dioxin response element (DRE) of target gene promoters and activates their transcription.</text>
</comment>
<comment type="subunit">
    <text evidence="1 2">Homodimer (By similarity). Heterodimer; efficient DNA binding requires dimerization with another bHLH protein. Interacts with ARNT; the heterodimer ARNT:AHR binds to core DNA sequence 5'-TGCGTG-3' within the dioxin response element (DRE) of target gene promoters and activates their transcription (By similarity). Binds MYBBP1A (By similarity). Interacts with coactivators including SRC-1, RIP140 and NOCA7, and with the corepressor SMRT. Interacts with NEDD8 and IVNS1ABP (By similarity). Interacts with BMAL1. Interacts with HSP90AB1 (By similarity). Interacts with TIPARP; leading to mono-ADP-ribosylation of AHR and subsequent inhibition of AHR (By similarity).</text>
</comment>
<comment type="subcellular location">
    <subcellularLocation>
        <location evidence="1">Cytoplasm</location>
    </subcellularLocation>
    <subcellularLocation>
        <location evidence="1">Nucleus</location>
    </subcellularLocation>
    <text evidence="1">Initially cytoplasmic; upon binding with ligand and interaction with a HSP90, it translocates to the nucleus.</text>
</comment>
<comment type="domain">
    <text evidence="1">The PAS 1 domain is essential for dimerization and also required for AHR:ARNT heterodimerization.</text>
</comment>
<comment type="PTM">
    <text evidence="2">Mono-ADP-ribosylated, leading to inhibit transcription activator activity of AHR.</text>
</comment>
<keyword id="KW-0010">Activator</keyword>
<keyword id="KW-0013">ADP-ribosylation</keyword>
<keyword id="KW-0090">Biological rhythms</keyword>
<keyword id="KW-0131">Cell cycle</keyword>
<keyword id="KW-0963">Cytoplasm</keyword>
<keyword id="KW-0238">DNA-binding</keyword>
<keyword id="KW-0539">Nucleus</keyword>
<keyword id="KW-0675">Receptor</keyword>
<keyword id="KW-0677">Repeat</keyword>
<keyword id="KW-0678">Repressor</keyword>
<keyword id="KW-0804">Transcription</keyword>
<keyword id="KW-0805">Transcription regulation</keyword>
<protein>
    <recommendedName>
        <fullName>Aryl hydrocarbon receptor</fullName>
        <shortName>Ah receptor</shortName>
        <shortName>AhR</shortName>
    </recommendedName>
</protein>
<organism evidence="7">
    <name type="scientific">Mus spretus</name>
    <name type="common">Western Mediterranean mouse</name>
    <name type="synonym">Algerian mouse</name>
    <dbReference type="NCBI Taxonomy" id="10096"/>
    <lineage>
        <taxon>Eukaryota</taxon>
        <taxon>Metazoa</taxon>
        <taxon>Chordata</taxon>
        <taxon>Craniata</taxon>
        <taxon>Vertebrata</taxon>
        <taxon>Euteleostomi</taxon>
        <taxon>Mammalia</taxon>
        <taxon>Eutheria</taxon>
        <taxon>Euarchontoglires</taxon>
        <taxon>Glires</taxon>
        <taxon>Rodentia</taxon>
        <taxon>Myomorpha</taxon>
        <taxon>Muroidea</taxon>
        <taxon>Muridae</taxon>
        <taxon>Murinae</taxon>
        <taxon>Mus</taxon>
        <taxon>Mus</taxon>
    </lineage>
</organism>